<sequence length="238" mass="25907">MRPSKRAADEMRAISFERGVSKHAEGSCLVKFGDTHVLCTASLEEKVPGWMRNTGKGWVTAEYGMLPRSTGERMRREAAAGKQGGRTQEIQRLIGRSLRAVVDMQALGEMQITVDCDVIQADGGTRTAAITGGWVALHECLRWMEARQMVRVEKVLKDHVAAISCGIYEGVPVLDLDYAEDSVAETDSNFVMTGKGGIVEIQGTAEGVPFSEEEFGALMKLARSGIDRLVSLQKMAVA</sequence>
<organism>
    <name type="scientific">Brucella ovis (strain ATCC 25840 / 63/290 / NCTC 10512)</name>
    <dbReference type="NCBI Taxonomy" id="444178"/>
    <lineage>
        <taxon>Bacteria</taxon>
        <taxon>Pseudomonadati</taxon>
        <taxon>Pseudomonadota</taxon>
        <taxon>Alphaproteobacteria</taxon>
        <taxon>Hyphomicrobiales</taxon>
        <taxon>Brucellaceae</taxon>
        <taxon>Brucella/Ochrobactrum group</taxon>
        <taxon>Brucella</taxon>
    </lineage>
</organism>
<name>RNPH_BRUO2</name>
<protein>
    <recommendedName>
        <fullName evidence="1">Ribonuclease PH</fullName>
        <shortName evidence="1">RNase PH</shortName>
        <ecNumber evidence="1">2.7.7.56</ecNumber>
    </recommendedName>
    <alternativeName>
        <fullName evidence="1">tRNA nucleotidyltransferase</fullName>
    </alternativeName>
</protein>
<feature type="chain" id="PRO_1000024782" description="Ribonuclease PH">
    <location>
        <begin position="1"/>
        <end position="238"/>
    </location>
</feature>
<feature type="binding site" evidence="1">
    <location>
        <position position="86"/>
    </location>
    <ligand>
        <name>phosphate</name>
        <dbReference type="ChEBI" id="CHEBI:43474"/>
        <note>substrate</note>
    </ligand>
</feature>
<feature type="binding site" evidence="1">
    <location>
        <begin position="124"/>
        <end position="126"/>
    </location>
    <ligand>
        <name>phosphate</name>
        <dbReference type="ChEBI" id="CHEBI:43474"/>
        <note>substrate</note>
    </ligand>
</feature>
<keyword id="KW-0548">Nucleotidyltransferase</keyword>
<keyword id="KW-0694">RNA-binding</keyword>
<keyword id="KW-0698">rRNA processing</keyword>
<keyword id="KW-0808">Transferase</keyword>
<keyword id="KW-0819">tRNA processing</keyword>
<keyword id="KW-0820">tRNA-binding</keyword>
<comment type="function">
    <text evidence="1">Phosphorolytic 3'-5' exoribonuclease that plays an important role in tRNA 3'-end maturation. Removes nucleotide residues following the 3'-CCA terminus of tRNAs; can also add nucleotides to the ends of RNA molecules by using nucleoside diphosphates as substrates, but this may not be physiologically important. Probably plays a role in initiation of 16S rRNA degradation (leading to ribosome degradation) during starvation.</text>
</comment>
<comment type="catalytic activity">
    <reaction evidence="1">
        <text>tRNA(n+1) + phosphate = tRNA(n) + a ribonucleoside 5'-diphosphate</text>
        <dbReference type="Rhea" id="RHEA:10628"/>
        <dbReference type="Rhea" id="RHEA-COMP:17343"/>
        <dbReference type="Rhea" id="RHEA-COMP:17344"/>
        <dbReference type="ChEBI" id="CHEBI:43474"/>
        <dbReference type="ChEBI" id="CHEBI:57930"/>
        <dbReference type="ChEBI" id="CHEBI:173114"/>
        <dbReference type="EC" id="2.7.7.56"/>
    </reaction>
</comment>
<comment type="subunit">
    <text evidence="1">Homohexameric ring arranged as a trimer of dimers.</text>
</comment>
<comment type="similarity">
    <text evidence="1">Belongs to the RNase PH family.</text>
</comment>
<proteinExistence type="inferred from homology"/>
<evidence type="ECO:0000255" key="1">
    <source>
        <dbReference type="HAMAP-Rule" id="MF_00564"/>
    </source>
</evidence>
<reference key="1">
    <citation type="journal article" date="2009" name="PLoS ONE">
        <title>Genome degradation in Brucella ovis corresponds with narrowing of its host range and tissue tropism.</title>
        <authorList>
            <person name="Tsolis R.M."/>
            <person name="Seshadri R."/>
            <person name="Santos R.L."/>
            <person name="Sangari F.J."/>
            <person name="Lobo J.M."/>
            <person name="de Jong M.F."/>
            <person name="Ren Q."/>
            <person name="Myers G."/>
            <person name="Brinkac L.M."/>
            <person name="Nelson W.C."/>
            <person name="Deboy R.T."/>
            <person name="Angiuoli S."/>
            <person name="Khouri H."/>
            <person name="Dimitrov G."/>
            <person name="Robinson J.R."/>
            <person name="Mulligan S."/>
            <person name="Walker R.L."/>
            <person name="Elzer P.E."/>
            <person name="Hassan K.A."/>
            <person name="Paulsen I.T."/>
        </authorList>
    </citation>
    <scope>NUCLEOTIDE SEQUENCE [LARGE SCALE GENOMIC DNA]</scope>
    <source>
        <strain>ATCC 25840 / 63/290 / NCTC 10512</strain>
    </source>
</reference>
<dbReference type="EC" id="2.7.7.56" evidence="1"/>
<dbReference type="EMBL" id="CP000708">
    <property type="protein sequence ID" value="ABQ60510.1"/>
    <property type="molecule type" value="Genomic_DNA"/>
</dbReference>
<dbReference type="RefSeq" id="WP_002965421.1">
    <property type="nucleotide sequence ID" value="NC_009505.1"/>
</dbReference>
<dbReference type="SMR" id="A5VNA8"/>
<dbReference type="GeneID" id="97534418"/>
<dbReference type="KEGG" id="bov:BOV_0167"/>
<dbReference type="HOGENOM" id="CLU_050858_0_0_5"/>
<dbReference type="PhylomeDB" id="A5VNA8"/>
<dbReference type="Proteomes" id="UP000006383">
    <property type="component" value="Chromosome I"/>
</dbReference>
<dbReference type="GO" id="GO:0000175">
    <property type="term" value="F:3'-5'-RNA exonuclease activity"/>
    <property type="evidence" value="ECO:0007669"/>
    <property type="project" value="UniProtKB-UniRule"/>
</dbReference>
<dbReference type="GO" id="GO:0000049">
    <property type="term" value="F:tRNA binding"/>
    <property type="evidence" value="ECO:0007669"/>
    <property type="project" value="UniProtKB-UniRule"/>
</dbReference>
<dbReference type="GO" id="GO:0009022">
    <property type="term" value="F:tRNA nucleotidyltransferase activity"/>
    <property type="evidence" value="ECO:0007669"/>
    <property type="project" value="UniProtKB-UniRule"/>
</dbReference>
<dbReference type="GO" id="GO:0016075">
    <property type="term" value="P:rRNA catabolic process"/>
    <property type="evidence" value="ECO:0007669"/>
    <property type="project" value="UniProtKB-UniRule"/>
</dbReference>
<dbReference type="GO" id="GO:0006364">
    <property type="term" value="P:rRNA processing"/>
    <property type="evidence" value="ECO:0007669"/>
    <property type="project" value="UniProtKB-KW"/>
</dbReference>
<dbReference type="GO" id="GO:0008033">
    <property type="term" value="P:tRNA processing"/>
    <property type="evidence" value="ECO:0007669"/>
    <property type="project" value="UniProtKB-UniRule"/>
</dbReference>
<dbReference type="CDD" id="cd11362">
    <property type="entry name" value="RNase_PH_bact"/>
    <property type="match status" value="1"/>
</dbReference>
<dbReference type="FunFam" id="3.30.230.70:FF:000003">
    <property type="entry name" value="Ribonuclease PH"/>
    <property type="match status" value="1"/>
</dbReference>
<dbReference type="Gene3D" id="3.30.230.70">
    <property type="entry name" value="GHMP Kinase, N-terminal domain"/>
    <property type="match status" value="1"/>
</dbReference>
<dbReference type="HAMAP" id="MF_00564">
    <property type="entry name" value="RNase_PH"/>
    <property type="match status" value="1"/>
</dbReference>
<dbReference type="InterPro" id="IPR001247">
    <property type="entry name" value="ExoRNase_PH_dom1"/>
</dbReference>
<dbReference type="InterPro" id="IPR015847">
    <property type="entry name" value="ExoRNase_PH_dom2"/>
</dbReference>
<dbReference type="InterPro" id="IPR036345">
    <property type="entry name" value="ExoRNase_PH_dom2_sf"/>
</dbReference>
<dbReference type="InterPro" id="IPR027408">
    <property type="entry name" value="PNPase/RNase_PH_dom_sf"/>
</dbReference>
<dbReference type="InterPro" id="IPR020568">
    <property type="entry name" value="Ribosomal_Su5_D2-typ_SF"/>
</dbReference>
<dbReference type="InterPro" id="IPR050080">
    <property type="entry name" value="RNase_PH"/>
</dbReference>
<dbReference type="InterPro" id="IPR002381">
    <property type="entry name" value="RNase_PH_bac-type"/>
</dbReference>
<dbReference type="InterPro" id="IPR018336">
    <property type="entry name" value="RNase_PH_CS"/>
</dbReference>
<dbReference type="NCBIfam" id="TIGR01966">
    <property type="entry name" value="RNasePH"/>
    <property type="match status" value="1"/>
</dbReference>
<dbReference type="PANTHER" id="PTHR11953">
    <property type="entry name" value="EXOSOME COMPLEX COMPONENT"/>
    <property type="match status" value="1"/>
</dbReference>
<dbReference type="PANTHER" id="PTHR11953:SF0">
    <property type="entry name" value="EXOSOME COMPLEX COMPONENT RRP41"/>
    <property type="match status" value="1"/>
</dbReference>
<dbReference type="Pfam" id="PF01138">
    <property type="entry name" value="RNase_PH"/>
    <property type="match status" value="1"/>
</dbReference>
<dbReference type="Pfam" id="PF03725">
    <property type="entry name" value="RNase_PH_C"/>
    <property type="match status" value="1"/>
</dbReference>
<dbReference type="SUPFAM" id="SSF55666">
    <property type="entry name" value="Ribonuclease PH domain 2-like"/>
    <property type="match status" value="1"/>
</dbReference>
<dbReference type="SUPFAM" id="SSF54211">
    <property type="entry name" value="Ribosomal protein S5 domain 2-like"/>
    <property type="match status" value="1"/>
</dbReference>
<dbReference type="PROSITE" id="PS01277">
    <property type="entry name" value="RIBONUCLEASE_PH"/>
    <property type="match status" value="1"/>
</dbReference>
<gene>
    <name evidence="1" type="primary">rph</name>
    <name type="ordered locus">BOV_0167</name>
</gene>
<accession>A5VNA8</accession>